<proteinExistence type="inferred from homology"/>
<name>RES_CLOPF</name>
<dbReference type="EMBL" id="Y00537">
    <property type="protein sequence ID" value="CAA68600.1"/>
    <property type="molecule type" value="Genomic_DNA"/>
</dbReference>
<dbReference type="EMBL" id="M32882">
    <property type="protein sequence ID" value="AAA98254.1"/>
    <property type="molecule type" value="Genomic_DNA"/>
</dbReference>
<dbReference type="PIR" id="S00869">
    <property type="entry name" value="S00869"/>
</dbReference>
<dbReference type="RefSeq" id="NP_040456.1">
    <property type="nucleotide sequence ID" value="NC_001388.1"/>
</dbReference>
<dbReference type="RefSeq" id="WP_010889928.1">
    <property type="nucleotide sequence ID" value="NC_001388.1"/>
</dbReference>
<dbReference type="SMR" id="P07945"/>
<dbReference type="GO" id="GO:0003677">
    <property type="term" value="F:DNA binding"/>
    <property type="evidence" value="ECO:0007669"/>
    <property type="project" value="UniProtKB-KW"/>
</dbReference>
<dbReference type="GO" id="GO:0000150">
    <property type="term" value="F:DNA strand exchange activity"/>
    <property type="evidence" value="ECO:0007669"/>
    <property type="project" value="InterPro"/>
</dbReference>
<dbReference type="GO" id="GO:0015074">
    <property type="term" value="P:DNA integration"/>
    <property type="evidence" value="ECO:0007669"/>
    <property type="project" value="UniProtKB-KW"/>
</dbReference>
<dbReference type="CDD" id="cd03768">
    <property type="entry name" value="SR_ResInv"/>
    <property type="match status" value="1"/>
</dbReference>
<dbReference type="Gene3D" id="1.10.10.60">
    <property type="entry name" value="Homeodomain-like"/>
    <property type="match status" value="1"/>
</dbReference>
<dbReference type="Gene3D" id="3.40.50.1390">
    <property type="entry name" value="Resolvase, N-terminal catalytic domain"/>
    <property type="match status" value="1"/>
</dbReference>
<dbReference type="InterPro" id="IPR009057">
    <property type="entry name" value="Homeodomain-like_sf"/>
</dbReference>
<dbReference type="InterPro" id="IPR006118">
    <property type="entry name" value="Recombinase_CS"/>
</dbReference>
<dbReference type="InterPro" id="IPR006119">
    <property type="entry name" value="Resolv_N"/>
</dbReference>
<dbReference type="InterPro" id="IPR036162">
    <property type="entry name" value="Resolvase-like_N_sf"/>
</dbReference>
<dbReference type="InterPro" id="IPR006120">
    <property type="entry name" value="Resolvase_HTH_dom"/>
</dbReference>
<dbReference type="InterPro" id="IPR050639">
    <property type="entry name" value="SSR_resolvase"/>
</dbReference>
<dbReference type="PANTHER" id="PTHR30461">
    <property type="entry name" value="DNA-INVERTASE FROM LAMBDOID PROPHAGE"/>
    <property type="match status" value="1"/>
</dbReference>
<dbReference type="PANTHER" id="PTHR30461:SF2">
    <property type="entry name" value="SERINE RECOMBINASE PINE-RELATED"/>
    <property type="match status" value="1"/>
</dbReference>
<dbReference type="Pfam" id="PF02796">
    <property type="entry name" value="HTH_7"/>
    <property type="match status" value="1"/>
</dbReference>
<dbReference type="Pfam" id="PF00239">
    <property type="entry name" value="Resolvase"/>
    <property type="match status" value="1"/>
</dbReference>
<dbReference type="SMART" id="SM00857">
    <property type="entry name" value="Resolvase"/>
    <property type="match status" value="1"/>
</dbReference>
<dbReference type="SUPFAM" id="SSF46689">
    <property type="entry name" value="Homeodomain-like"/>
    <property type="match status" value="1"/>
</dbReference>
<dbReference type="SUPFAM" id="SSF53041">
    <property type="entry name" value="Resolvase-like"/>
    <property type="match status" value="1"/>
</dbReference>
<dbReference type="PROSITE" id="PS00397">
    <property type="entry name" value="RECOMBINASES_1"/>
    <property type="match status" value="1"/>
</dbReference>
<dbReference type="PROSITE" id="PS00398">
    <property type="entry name" value="RECOMBINASES_2"/>
    <property type="match status" value="1"/>
</dbReference>
<dbReference type="PROSITE" id="PS51736">
    <property type="entry name" value="RECOMBINASES_3"/>
    <property type="match status" value="1"/>
</dbReference>
<accession>P07945</accession>
<reference key="1">
    <citation type="journal article" date="1988" name="Plasmid">
        <title>Complete nucleotide sequence and genetic organization of the bacteriocinogenic plasmid, pIP404, from Clostridium perfringens.</title>
        <authorList>
            <person name="Garnier T."/>
            <person name="Cole S.T."/>
        </authorList>
    </citation>
    <scope>NUCLEOTIDE SEQUENCE [GENOMIC DNA]</scope>
    <source>
        <strain>CPN50</strain>
    </source>
</reference>
<reference key="2">
    <citation type="journal article" date="1987" name="Mol. Microbiol.">
        <title>Molecular characterization of the resolvase gene, res, carried by a multicopy plasmid from Clostridium perfringens: common evolutionary origin for prokaryotic site-specific recombinases.</title>
        <authorList>
            <person name="Garnier T."/>
            <person name="Saurin W."/>
            <person name="Cole S.T."/>
        </authorList>
    </citation>
    <scope>NUCLEOTIDE SEQUENCE [GENOMIC DNA]</scope>
    <source>
        <strain>CPN50</strain>
    </source>
</reference>
<keyword id="KW-0229">DNA integration</keyword>
<keyword id="KW-0233">DNA recombination</keyword>
<keyword id="KW-0238">DNA-binding</keyword>
<keyword id="KW-0614">Plasmid</keyword>
<feature type="chain" id="PRO_0000196366" description="Resolvase">
    <location>
        <begin position="1"/>
        <end position="189"/>
    </location>
</feature>
<feature type="domain" description="Resolvase/invertase-type recombinase catalytic" evidence="2">
    <location>
        <begin position="1"/>
        <end position="139"/>
    </location>
</feature>
<feature type="DNA-binding region" description="H-T-H motif" evidence="1">
    <location>
        <begin position="165"/>
        <end position="184"/>
    </location>
</feature>
<feature type="region of interest" description="Disordered" evidence="3">
    <location>
        <begin position="130"/>
        <end position="151"/>
    </location>
</feature>
<feature type="active site" description="O-(5'-phospho-DNA)-serine intermediate" evidence="2">
    <location>
        <position position="9"/>
    </location>
</feature>
<geneLocation type="plasmid">
    <name>pIP404</name>
</geneLocation>
<sequence length="189" mass="21428">MLVGYARVSTEEQSLNRQIDMLVDYGVDKRNIYQEKISGMKPNREQLDKMIDELQEGDTVIITDLTRISRSTKDLLNIIDRIKAKGASIKSIKDTWLDTSSDNPYNSFLLTVMSGLSQLERDLISQRTKEGLKSAKARGRNGGRPSKRNDKADTVGLLYREGYKIVDIVKQTGLSRATVYRVLNDLKLK</sequence>
<comment type="function">
    <text>A likely role for the res protein would be to stabilize pIP404 by reducing the number of plasmid multimers resulting from homologous recombination.</text>
</comment>
<comment type="similarity">
    <text evidence="4">Belongs to the site-specific recombinase resolvase family.</text>
</comment>
<protein>
    <recommendedName>
        <fullName>Resolvase</fullName>
    </recommendedName>
</protein>
<gene>
    <name type="primary">res</name>
</gene>
<evidence type="ECO:0000255" key="1"/>
<evidence type="ECO:0000255" key="2">
    <source>
        <dbReference type="PROSITE-ProRule" id="PRU01072"/>
    </source>
</evidence>
<evidence type="ECO:0000256" key="3">
    <source>
        <dbReference type="SAM" id="MobiDB-lite"/>
    </source>
</evidence>
<evidence type="ECO:0000305" key="4"/>
<organism>
    <name type="scientific">Clostridium perfringens</name>
    <dbReference type="NCBI Taxonomy" id="1502"/>
    <lineage>
        <taxon>Bacteria</taxon>
        <taxon>Bacillati</taxon>
        <taxon>Bacillota</taxon>
        <taxon>Clostridia</taxon>
        <taxon>Eubacteriales</taxon>
        <taxon>Clostridiaceae</taxon>
        <taxon>Clostridium</taxon>
    </lineage>
</organism>